<comment type="function">
    <text evidence="1">Catalyzes the pyruvoyl-dependent decarboxylation of aspartate to produce beta-alanine.</text>
</comment>
<comment type="catalytic activity">
    <reaction evidence="1">
        <text>L-aspartate + H(+) = beta-alanine + CO2</text>
        <dbReference type="Rhea" id="RHEA:19497"/>
        <dbReference type="ChEBI" id="CHEBI:15378"/>
        <dbReference type="ChEBI" id="CHEBI:16526"/>
        <dbReference type="ChEBI" id="CHEBI:29991"/>
        <dbReference type="ChEBI" id="CHEBI:57966"/>
        <dbReference type="EC" id="4.1.1.11"/>
    </reaction>
</comment>
<comment type="cofactor">
    <cofactor evidence="1">
        <name>pyruvate</name>
        <dbReference type="ChEBI" id="CHEBI:15361"/>
    </cofactor>
    <text evidence="1">Binds 1 pyruvoyl group covalently per subunit.</text>
</comment>
<comment type="pathway">
    <text evidence="1">Cofactor biosynthesis; (R)-pantothenate biosynthesis; beta-alanine from L-aspartate: step 1/1.</text>
</comment>
<comment type="subunit">
    <text evidence="1">Heterooctamer of four alpha and four beta subunits.</text>
</comment>
<comment type="subcellular location">
    <subcellularLocation>
        <location evidence="1">Cytoplasm</location>
    </subcellularLocation>
</comment>
<comment type="PTM">
    <text evidence="1">Is synthesized initially as an inactive proenzyme, which is activated by self-cleavage at a specific serine bond to produce a beta-subunit with a hydroxyl group at its C-terminus and an alpha-subunit with a pyruvoyl group at its N-terminus.</text>
</comment>
<comment type="similarity">
    <text evidence="1">Belongs to the PanD family.</text>
</comment>
<evidence type="ECO:0000255" key="1">
    <source>
        <dbReference type="HAMAP-Rule" id="MF_00446"/>
    </source>
</evidence>
<protein>
    <recommendedName>
        <fullName evidence="1">Aspartate 1-decarboxylase</fullName>
        <ecNumber evidence="1">4.1.1.11</ecNumber>
    </recommendedName>
    <alternativeName>
        <fullName evidence="1">Aspartate alpha-decarboxylase</fullName>
    </alternativeName>
    <component>
        <recommendedName>
            <fullName evidence="1">Aspartate 1-decarboxylase beta chain</fullName>
        </recommendedName>
    </component>
    <component>
        <recommendedName>
            <fullName evidence="1">Aspartate 1-decarboxylase alpha chain</fullName>
        </recommendedName>
    </component>
</protein>
<dbReference type="EC" id="4.1.1.11" evidence="1"/>
<dbReference type="EMBL" id="AM743169">
    <property type="protein sequence ID" value="CAQ45303.1"/>
    <property type="molecule type" value="Genomic_DNA"/>
</dbReference>
<dbReference type="RefSeq" id="WP_005409061.1">
    <property type="nucleotide sequence ID" value="NC_010943.1"/>
</dbReference>
<dbReference type="SMR" id="B2FL70"/>
<dbReference type="EnsemblBacteria" id="CAQ45303">
    <property type="protein sequence ID" value="CAQ45303"/>
    <property type="gene ID" value="Smlt1782"/>
</dbReference>
<dbReference type="GeneID" id="93832981"/>
<dbReference type="KEGG" id="sml:Smlt1782"/>
<dbReference type="eggNOG" id="COG0853">
    <property type="taxonomic scope" value="Bacteria"/>
</dbReference>
<dbReference type="HOGENOM" id="CLU_115305_2_1_6"/>
<dbReference type="UniPathway" id="UPA00028">
    <property type="reaction ID" value="UER00002"/>
</dbReference>
<dbReference type="Proteomes" id="UP000008840">
    <property type="component" value="Chromosome"/>
</dbReference>
<dbReference type="GO" id="GO:0005829">
    <property type="term" value="C:cytosol"/>
    <property type="evidence" value="ECO:0007669"/>
    <property type="project" value="TreeGrafter"/>
</dbReference>
<dbReference type="GO" id="GO:0004068">
    <property type="term" value="F:aspartate 1-decarboxylase activity"/>
    <property type="evidence" value="ECO:0007669"/>
    <property type="project" value="UniProtKB-UniRule"/>
</dbReference>
<dbReference type="GO" id="GO:0006523">
    <property type="term" value="P:alanine biosynthetic process"/>
    <property type="evidence" value="ECO:0007669"/>
    <property type="project" value="InterPro"/>
</dbReference>
<dbReference type="GO" id="GO:0015940">
    <property type="term" value="P:pantothenate biosynthetic process"/>
    <property type="evidence" value="ECO:0007669"/>
    <property type="project" value="UniProtKB-UniRule"/>
</dbReference>
<dbReference type="CDD" id="cd06919">
    <property type="entry name" value="Asp_decarbox"/>
    <property type="match status" value="1"/>
</dbReference>
<dbReference type="Gene3D" id="2.40.40.20">
    <property type="match status" value="1"/>
</dbReference>
<dbReference type="HAMAP" id="MF_00446">
    <property type="entry name" value="PanD"/>
    <property type="match status" value="1"/>
</dbReference>
<dbReference type="InterPro" id="IPR009010">
    <property type="entry name" value="Asp_de-COase-like_dom_sf"/>
</dbReference>
<dbReference type="InterPro" id="IPR003190">
    <property type="entry name" value="Asp_decarbox"/>
</dbReference>
<dbReference type="NCBIfam" id="TIGR00223">
    <property type="entry name" value="panD"/>
    <property type="match status" value="1"/>
</dbReference>
<dbReference type="PANTHER" id="PTHR21012">
    <property type="entry name" value="ASPARTATE 1-DECARBOXYLASE"/>
    <property type="match status" value="1"/>
</dbReference>
<dbReference type="PANTHER" id="PTHR21012:SF0">
    <property type="entry name" value="ASPARTATE 1-DECARBOXYLASE"/>
    <property type="match status" value="1"/>
</dbReference>
<dbReference type="Pfam" id="PF02261">
    <property type="entry name" value="Asp_decarbox"/>
    <property type="match status" value="1"/>
</dbReference>
<dbReference type="PIRSF" id="PIRSF006246">
    <property type="entry name" value="Asp_decarbox"/>
    <property type="match status" value="1"/>
</dbReference>
<dbReference type="SUPFAM" id="SSF50692">
    <property type="entry name" value="ADC-like"/>
    <property type="match status" value="1"/>
</dbReference>
<name>PAND_STRMK</name>
<keyword id="KW-0068">Autocatalytic cleavage</keyword>
<keyword id="KW-0963">Cytoplasm</keyword>
<keyword id="KW-0210">Decarboxylase</keyword>
<keyword id="KW-0456">Lyase</keyword>
<keyword id="KW-0566">Pantothenate biosynthesis</keyword>
<keyword id="KW-0670">Pyruvate</keyword>
<keyword id="KW-1185">Reference proteome</keyword>
<keyword id="KW-0704">Schiff base</keyword>
<keyword id="KW-0865">Zymogen</keyword>
<organism>
    <name type="scientific">Stenotrophomonas maltophilia (strain K279a)</name>
    <dbReference type="NCBI Taxonomy" id="522373"/>
    <lineage>
        <taxon>Bacteria</taxon>
        <taxon>Pseudomonadati</taxon>
        <taxon>Pseudomonadota</taxon>
        <taxon>Gammaproteobacteria</taxon>
        <taxon>Lysobacterales</taxon>
        <taxon>Lysobacteraceae</taxon>
        <taxon>Stenotrophomonas</taxon>
        <taxon>Stenotrophomonas maltophilia group</taxon>
    </lineage>
</organism>
<proteinExistence type="inferred from homology"/>
<accession>B2FL70</accession>
<feature type="chain" id="PRO_1000192041" description="Aspartate 1-decarboxylase beta chain" evidence="1">
    <location>
        <begin position="1"/>
        <end position="24"/>
    </location>
</feature>
<feature type="chain" id="PRO_1000192042" description="Aspartate 1-decarboxylase alpha chain" evidence="1">
    <location>
        <begin position="25"/>
        <end position="126"/>
    </location>
</feature>
<feature type="active site" description="Schiff-base intermediate with substrate; via pyruvic acid" evidence="1">
    <location>
        <position position="25"/>
    </location>
</feature>
<feature type="active site" description="Proton donor" evidence="1">
    <location>
        <position position="58"/>
    </location>
</feature>
<feature type="binding site" evidence="1">
    <location>
        <position position="57"/>
    </location>
    <ligand>
        <name>substrate</name>
    </ligand>
</feature>
<feature type="binding site" evidence="1">
    <location>
        <begin position="73"/>
        <end position="75"/>
    </location>
    <ligand>
        <name>substrate</name>
    </ligand>
</feature>
<feature type="modified residue" description="Pyruvic acid (Ser)" evidence="1">
    <location>
        <position position="25"/>
    </location>
</feature>
<gene>
    <name evidence="1" type="primary">panD</name>
    <name type="ordered locus">Smlt1782</name>
</gene>
<sequence length="126" mass="13633">MHLSLLKTKIHRATVTHSELNYEGSIAIDDNLLAATGIREFEQVHIWDVTNGARFSTYAIRAEAGSGVVSLNGGAARHVQVGDIIIIAAFASMTEQEADSFKPKLVYVDGKNQITHTNDTIPTQAA</sequence>
<reference key="1">
    <citation type="journal article" date="2008" name="Genome Biol.">
        <title>The complete genome, comparative and functional analysis of Stenotrophomonas maltophilia reveals an organism heavily shielded by drug resistance determinants.</title>
        <authorList>
            <person name="Crossman L.C."/>
            <person name="Gould V.C."/>
            <person name="Dow J.M."/>
            <person name="Vernikos G.S."/>
            <person name="Okazaki A."/>
            <person name="Sebaihia M."/>
            <person name="Saunders D."/>
            <person name="Arrowsmith C."/>
            <person name="Carver T."/>
            <person name="Peters N."/>
            <person name="Adlem E."/>
            <person name="Kerhornou A."/>
            <person name="Lord A."/>
            <person name="Murphy L."/>
            <person name="Seeger K."/>
            <person name="Squares R."/>
            <person name="Rutter S."/>
            <person name="Quail M.A."/>
            <person name="Rajandream M.A."/>
            <person name="Harris D."/>
            <person name="Churcher C."/>
            <person name="Bentley S.D."/>
            <person name="Parkhill J."/>
            <person name="Thomson N.R."/>
            <person name="Avison M.B."/>
        </authorList>
    </citation>
    <scope>NUCLEOTIDE SEQUENCE [LARGE SCALE GENOMIC DNA]</scope>
    <source>
        <strain>K279a</strain>
    </source>
</reference>